<gene>
    <name evidence="1" type="primary">rex</name>
    <name type="ordered locus">Rxyl_3182</name>
</gene>
<sequence>MRTTLQPGLTNRLTKYLRVTQQLIEEGRDAVSSKELGDFTGINPVQVRRDLNAIGFSGTRGVGYQAYDLVEAVRGILGLRQTYNIALVGAGNLGSAIASSTILPKRGFVIHDVFDNDPQKIGRTVGNVVVKHIDELKKSVAEADEVIGIIATPASAAQQVADLMVEANIRVILNYTDVLLHVPPGVTVHRIDPTAQLMHTLYYLTQAETEEAAPAT</sequence>
<keyword id="KW-0963">Cytoplasm</keyword>
<keyword id="KW-0238">DNA-binding</keyword>
<keyword id="KW-0520">NAD</keyword>
<keyword id="KW-1185">Reference proteome</keyword>
<keyword id="KW-0678">Repressor</keyword>
<keyword id="KW-0804">Transcription</keyword>
<keyword id="KW-0805">Transcription regulation</keyword>
<name>REX_RUBXD</name>
<organism>
    <name type="scientific">Rubrobacter xylanophilus (strain DSM 9941 / JCM 11954 / NBRC 16129 / PRD-1)</name>
    <dbReference type="NCBI Taxonomy" id="266117"/>
    <lineage>
        <taxon>Bacteria</taxon>
        <taxon>Bacillati</taxon>
        <taxon>Actinomycetota</taxon>
        <taxon>Rubrobacteria</taxon>
        <taxon>Rubrobacterales</taxon>
        <taxon>Rubrobacteraceae</taxon>
        <taxon>Rubrobacter</taxon>
    </lineage>
</organism>
<protein>
    <recommendedName>
        <fullName evidence="1">Redox-sensing transcriptional repressor Rex</fullName>
    </recommendedName>
</protein>
<accession>Q1AR91</accession>
<feature type="chain" id="PRO_1000085026" description="Redox-sensing transcriptional repressor Rex">
    <location>
        <begin position="1"/>
        <end position="216"/>
    </location>
</feature>
<feature type="DNA-binding region" description="H-T-H motif" evidence="1">
    <location>
        <begin position="15"/>
        <end position="54"/>
    </location>
</feature>
<feature type="binding site" evidence="1">
    <location>
        <begin position="89"/>
        <end position="94"/>
    </location>
    <ligand>
        <name>NAD(+)</name>
        <dbReference type="ChEBI" id="CHEBI:57540"/>
    </ligand>
</feature>
<comment type="function">
    <text evidence="1">Modulates transcription in response to changes in cellular NADH/NAD(+) redox state.</text>
</comment>
<comment type="subunit">
    <text evidence="1">Homodimer.</text>
</comment>
<comment type="subcellular location">
    <subcellularLocation>
        <location evidence="1">Cytoplasm</location>
    </subcellularLocation>
</comment>
<comment type="similarity">
    <text evidence="1">Belongs to the transcriptional regulatory Rex family.</text>
</comment>
<dbReference type="EMBL" id="CP000386">
    <property type="protein sequence ID" value="ABG06087.1"/>
    <property type="molecule type" value="Genomic_DNA"/>
</dbReference>
<dbReference type="RefSeq" id="WP_011566092.1">
    <property type="nucleotide sequence ID" value="NC_008148.1"/>
</dbReference>
<dbReference type="SMR" id="Q1AR91"/>
<dbReference type="STRING" id="266117.Rxyl_3182"/>
<dbReference type="KEGG" id="rxy:Rxyl_3182"/>
<dbReference type="eggNOG" id="COG2344">
    <property type="taxonomic scope" value="Bacteria"/>
</dbReference>
<dbReference type="HOGENOM" id="CLU_061534_0_1_11"/>
<dbReference type="OrthoDB" id="9784760at2"/>
<dbReference type="PhylomeDB" id="Q1AR91"/>
<dbReference type="Proteomes" id="UP000006637">
    <property type="component" value="Chromosome"/>
</dbReference>
<dbReference type="GO" id="GO:0005737">
    <property type="term" value="C:cytoplasm"/>
    <property type="evidence" value="ECO:0007669"/>
    <property type="project" value="UniProtKB-SubCell"/>
</dbReference>
<dbReference type="GO" id="GO:0003677">
    <property type="term" value="F:DNA binding"/>
    <property type="evidence" value="ECO:0007669"/>
    <property type="project" value="UniProtKB-UniRule"/>
</dbReference>
<dbReference type="GO" id="GO:0003700">
    <property type="term" value="F:DNA-binding transcription factor activity"/>
    <property type="evidence" value="ECO:0007669"/>
    <property type="project" value="UniProtKB-UniRule"/>
</dbReference>
<dbReference type="GO" id="GO:0045892">
    <property type="term" value="P:negative regulation of DNA-templated transcription"/>
    <property type="evidence" value="ECO:0007669"/>
    <property type="project" value="InterPro"/>
</dbReference>
<dbReference type="GO" id="GO:0051775">
    <property type="term" value="P:response to redox state"/>
    <property type="evidence" value="ECO:0007669"/>
    <property type="project" value="InterPro"/>
</dbReference>
<dbReference type="Gene3D" id="3.40.50.720">
    <property type="entry name" value="NAD(P)-binding Rossmann-like Domain"/>
    <property type="match status" value="1"/>
</dbReference>
<dbReference type="Gene3D" id="1.10.10.10">
    <property type="entry name" value="Winged helix-like DNA-binding domain superfamily/Winged helix DNA-binding domain"/>
    <property type="match status" value="1"/>
</dbReference>
<dbReference type="HAMAP" id="MF_01131">
    <property type="entry name" value="Rex"/>
    <property type="match status" value="1"/>
</dbReference>
<dbReference type="InterPro" id="IPR003781">
    <property type="entry name" value="CoA-bd"/>
</dbReference>
<dbReference type="InterPro" id="IPR036291">
    <property type="entry name" value="NAD(P)-bd_dom_sf"/>
</dbReference>
<dbReference type="InterPro" id="IPR009718">
    <property type="entry name" value="Rex_DNA-bd_C_dom"/>
</dbReference>
<dbReference type="InterPro" id="IPR022876">
    <property type="entry name" value="Tscrpt_rep_Rex"/>
</dbReference>
<dbReference type="InterPro" id="IPR036388">
    <property type="entry name" value="WH-like_DNA-bd_sf"/>
</dbReference>
<dbReference type="InterPro" id="IPR036390">
    <property type="entry name" value="WH_DNA-bd_sf"/>
</dbReference>
<dbReference type="NCBIfam" id="NF003994">
    <property type="entry name" value="PRK05472.2-3"/>
    <property type="match status" value="1"/>
</dbReference>
<dbReference type="NCBIfam" id="NF003995">
    <property type="entry name" value="PRK05472.2-4"/>
    <property type="match status" value="1"/>
</dbReference>
<dbReference type="NCBIfam" id="NF003996">
    <property type="entry name" value="PRK05472.2-5"/>
    <property type="match status" value="1"/>
</dbReference>
<dbReference type="PANTHER" id="PTHR35786">
    <property type="entry name" value="REDOX-SENSING TRANSCRIPTIONAL REPRESSOR REX"/>
    <property type="match status" value="1"/>
</dbReference>
<dbReference type="PANTHER" id="PTHR35786:SF1">
    <property type="entry name" value="REDOX-SENSING TRANSCRIPTIONAL REPRESSOR REX 1"/>
    <property type="match status" value="1"/>
</dbReference>
<dbReference type="Pfam" id="PF02629">
    <property type="entry name" value="CoA_binding"/>
    <property type="match status" value="1"/>
</dbReference>
<dbReference type="Pfam" id="PF06971">
    <property type="entry name" value="Put_DNA-bind_N"/>
    <property type="match status" value="1"/>
</dbReference>
<dbReference type="SMART" id="SM00881">
    <property type="entry name" value="CoA_binding"/>
    <property type="match status" value="1"/>
</dbReference>
<dbReference type="SUPFAM" id="SSF51735">
    <property type="entry name" value="NAD(P)-binding Rossmann-fold domains"/>
    <property type="match status" value="1"/>
</dbReference>
<dbReference type="SUPFAM" id="SSF46785">
    <property type="entry name" value="Winged helix' DNA-binding domain"/>
    <property type="match status" value="1"/>
</dbReference>
<proteinExistence type="inferred from homology"/>
<evidence type="ECO:0000255" key="1">
    <source>
        <dbReference type="HAMAP-Rule" id="MF_01131"/>
    </source>
</evidence>
<reference key="1">
    <citation type="submission" date="2006-06" db="EMBL/GenBank/DDBJ databases">
        <title>Complete sequence of Rubrobacter xylanophilus DSM 9941.</title>
        <authorList>
            <consortium name="US DOE Joint Genome Institute"/>
            <person name="Copeland A."/>
            <person name="Lucas S."/>
            <person name="Lapidus A."/>
            <person name="Barry K."/>
            <person name="Detter J.C."/>
            <person name="Glavina del Rio T."/>
            <person name="Hammon N."/>
            <person name="Israni S."/>
            <person name="Dalin E."/>
            <person name="Tice H."/>
            <person name="Pitluck S."/>
            <person name="Munk A.C."/>
            <person name="Brettin T."/>
            <person name="Bruce D."/>
            <person name="Han C."/>
            <person name="Tapia R."/>
            <person name="Gilna P."/>
            <person name="Schmutz J."/>
            <person name="Larimer F."/>
            <person name="Land M."/>
            <person name="Hauser L."/>
            <person name="Kyrpides N."/>
            <person name="Lykidis A."/>
            <person name="da Costa M.S."/>
            <person name="Rainey F.A."/>
            <person name="Empadinhas N."/>
            <person name="Jolivet E."/>
            <person name="Battista J.R."/>
            <person name="Richardson P."/>
        </authorList>
    </citation>
    <scope>NUCLEOTIDE SEQUENCE [LARGE SCALE GENOMIC DNA]</scope>
    <source>
        <strain>DSM 9941 / JCM 11954 / NBRC 16129 / PRD-1</strain>
    </source>
</reference>